<protein>
    <recommendedName>
        <fullName evidence="1">3-hydroxyacyl-[acyl-carrier-protein] dehydratase FabZ</fullName>
        <ecNumber evidence="1">4.2.1.59</ecNumber>
    </recommendedName>
    <alternativeName>
        <fullName evidence="1">(3R)-hydroxymyristoyl-[acyl-carrier-protein] dehydratase</fullName>
        <shortName evidence="1">(3R)-hydroxymyristoyl-ACP dehydrase</shortName>
    </alternativeName>
    <alternativeName>
        <fullName evidence="1">Beta-hydroxyacyl-ACP dehydratase</fullName>
    </alternativeName>
</protein>
<accession>A1WHV3</accession>
<sequence>MDIHAIVKQLPHRYPFLLVDKVIELERNTRIKAIKNVTCNEPYFMGHFPGRPVMPGVLILEALAQAAGLLAFDAMGKVPDENNLYYLVGIDGARFKRPVEPGDQLILAITIDRVRGGIWKFKGLASVGDEVACEAELMCTMRSVGEPDRS</sequence>
<dbReference type="EC" id="4.2.1.59" evidence="1"/>
<dbReference type="EMBL" id="CP000542">
    <property type="protein sequence ID" value="ABM57210.1"/>
    <property type="status" value="ALT_INIT"/>
    <property type="molecule type" value="Genomic_DNA"/>
</dbReference>
<dbReference type="RefSeq" id="WP_011809217.1">
    <property type="nucleotide sequence ID" value="NC_008786.1"/>
</dbReference>
<dbReference type="SMR" id="A1WHV3"/>
<dbReference type="STRING" id="391735.Veis_1449"/>
<dbReference type="GeneID" id="76460074"/>
<dbReference type="KEGG" id="vei:Veis_1449"/>
<dbReference type="eggNOG" id="COG0764">
    <property type="taxonomic scope" value="Bacteria"/>
</dbReference>
<dbReference type="HOGENOM" id="CLU_078912_1_0_4"/>
<dbReference type="OrthoDB" id="9772788at2"/>
<dbReference type="Proteomes" id="UP000000374">
    <property type="component" value="Chromosome"/>
</dbReference>
<dbReference type="GO" id="GO:0005737">
    <property type="term" value="C:cytoplasm"/>
    <property type="evidence" value="ECO:0007669"/>
    <property type="project" value="UniProtKB-SubCell"/>
</dbReference>
<dbReference type="GO" id="GO:0016020">
    <property type="term" value="C:membrane"/>
    <property type="evidence" value="ECO:0007669"/>
    <property type="project" value="GOC"/>
</dbReference>
<dbReference type="GO" id="GO:0019171">
    <property type="term" value="F:(3R)-hydroxyacyl-[acyl-carrier-protein] dehydratase activity"/>
    <property type="evidence" value="ECO:0007669"/>
    <property type="project" value="UniProtKB-EC"/>
</dbReference>
<dbReference type="GO" id="GO:0006633">
    <property type="term" value="P:fatty acid biosynthetic process"/>
    <property type="evidence" value="ECO:0007669"/>
    <property type="project" value="UniProtKB-UniRule"/>
</dbReference>
<dbReference type="GO" id="GO:0009245">
    <property type="term" value="P:lipid A biosynthetic process"/>
    <property type="evidence" value="ECO:0007669"/>
    <property type="project" value="UniProtKB-UniRule"/>
</dbReference>
<dbReference type="CDD" id="cd01288">
    <property type="entry name" value="FabZ"/>
    <property type="match status" value="1"/>
</dbReference>
<dbReference type="FunFam" id="3.10.129.10:FF:000001">
    <property type="entry name" value="3-hydroxyacyl-[acyl-carrier-protein] dehydratase FabZ"/>
    <property type="match status" value="1"/>
</dbReference>
<dbReference type="Gene3D" id="3.10.129.10">
    <property type="entry name" value="Hotdog Thioesterase"/>
    <property type="match status" value="1"/>
</dbReference>
<dbReference type="HAMAP" id="MF_00406">
    <property type="entry name" value="FabZ"/>
    <property type="match status" value="1"/>
</dbReference>
<dbReference type="InterPro" id="IPR013114">
    <property type="entry name" value="FabA_FabZ"/>
</dbReference>
<dbReference type="InterPro" id="IPR010084">
    <property type="entry name" value="FabZ"/>
</dbReference>
<dbReference type="InterPro" id="IPR029069">
    <property type="entry name" value="HotDog_dom_sf"/>
</dbReference>
<dbReference type="NCBIfam" id="TIGR01750">
    <property type="entry name" value="fabZ"/>
    <property type="match status" value="1"/>
</dbReference>
<dbReference type="NCBIfam" id="NF000582">
    <property type="entry name" value="PRK00006.1"/>
    <property type="match status" value="1"/>
</dbReference>
<dbReference type="PANTHER" id="PTHR30272">
    <property type="entry name" value="3-HYDROXYACYL-[ACYL-CARRIER-PROTEIN] DEHYDRATASE"/>
    <property type="match status" value="1"/>
</dbReference>
<dbReference type="PANTHER" id="PTHR30272:SF1">
    <property type="entry name" value="3-HYDROXYACYL-[ACYL-CARRIER-PROTEIN] DEHYDRATASE"/>
    <property type="match status" value="1"/>
</dbReference>
<dbReference type="Pfam" id="PF07977">
    <property type="entry name" value="FabA"/>
    <property type="match status" value="1"/>
</dbReference>
<dbReference type="SUPFAM" id="SSF54637">
    <property type="entry name" value="Thioesterase/thiol ester dehydrase-isomerase"/>
    <property type="match status" value="1"/>
</dbReference>
<name>FABZ_VEREI</name>
<feature type="chain" id="PRO_0000340814" description="3-hydroxyacyl-[acyl-carrier-protein] dehydratase FabZ">
    <location>
        <begin position="1"/>
        <end position="150"/>
    </location>
</feature>
<feature type="active site" evidence="1">
    <location>
        <position position="47"/>
    </location>
</feature>
<comment type="function">
    <text evidence="1">Involved in unsaturated fatty acids biosynthesis. Catalyzes the dehydration of short chain beta-hydroxyacyl-ACPs and long chain saturated and unsaturated beta-hydroxyacyl-ACPs.</text>
</comment>
<comment type="catalytic activity">
    <reaction evidence="1">
        <text>a (3R)-hydroxyacyl-[ACP] = a (2E)-enoyl-[ACP] + H2O</text>
        <dbReference type="Rhea" id="RHEA:13097"/>
        <dbReference type="Rhea" id="RHEA-COMP:9925"/>
        <dbReference type="Rhea" id="RHEA-COMP:9945"/>
        <dbReference type="ChEBI" id="CHEBI:15377"/>
        <dbReference type="ChEBI" id="CHEBI:78784"/>
        <dbReference type="ChEBI" id="CHEBI:78827"/>
        <dbReference type="EC" id="4.2.1.59"/>
    </reaction>
</comment>
<comment type="subcellular location">
    <subcellularLocation>
        <location evidence="1">Cytoplasm</location>
    </subcellularLocation>
</comment>
<comment type="similarity">
    <text evidence="1">Belongs to the thioester dehydratase family. FabZ subfamily.</text>
</comment>
<comment type="sequence caution" evidence="2">
    <conflict type="erroneous initiation">
        <sequence resource="EMBL-CDS" id="ABM57210"/>
    </conflict>
</comment>
<gene>
    <name evidence="1" type="primary">fabZ</name>
    <name type="ordered locus">Veis_1449</name>
</gene>
<organism>
    <name type="scientific">Verminephrobacter eiseniae (strain EF01-2)</name>
    <dbReference type="NCBI Taxonomy" id="391735"/>
    <lineage>
        <taxon>Bacteria</taxon>
        <taxon>Pseudomonadati</taxon>
        <taxon>Pseudomonadota</taxon>
        <taxon>Betaproteobacteria</taxon>
        <taxon>Burkholderiales</taxon>
        <taxon>Comamonadaceae</taxon>
        <taxon>Verminephrobacter</taxon>
    </lineage>
</organism>
<proteinExistence type="inferred from homology"/>
<reference key="1">
    <citation type="submission" date="2006-12" db="EMBL/GenBank/DDBJ databases">
        <title>Complete sequence of chromosome 1 of Verminephrobacter eiseniae EF01-2.</title>
        <authorList>
            <person name="Copeland A."/>
            <person name="Lucas S."/>
            <person name="Lapidus A."/>
            <person name="Barry K."/>
            <person name="Detter J.C."/>
            <person name="Glavina del Rio T."/>
            <person name="Dalin E."/>
            <person name="Tice H."/>
            <person name="Pitluck S."/>
            <person name="Chertkov O."/>
            <person name="Brettin T."/>
            <person name="Bruce D."/>
            <person name="Han C."/>
            <person name="Tapia R."/>
            <person name="Gilna P."/>
            <person name="Schmutz J."/>
            <person name="Larimer F."/>
            <person name="Land M."/>
            <person name="Hauser L."/>
            <person name="Kyrpides N."/>
            <person name="Kim E."/>
            <person name="Stahl D."/>
            <person name="Richardson P."/>
        </authorList>
    </citation>
    <scope>NUCLEOTIDE SEQUENCE [LARGE SCALE GENOMIC DNA]</scope>
    <source>
        <strain>EF01-2</strain>
    </source>
</reference>
<evidence type="ECO:0000255" key="1">
    <source>
        <dbReference type="HAMAP-Rule" id="MF_00406"/>
    </source>
</evidence>
<evidence type="ECO:0000305" key="2"/>
<keyword id="KW-0963">Cytoplasm</keyword>
<keyword id="KW-0441">Lipid A biosynthesis</keyword>
<keyword id="KW-0444">Lipid biosynthesis</keyword>
<keyword id="KW-0443">Lipid metabolism</keyword>
<keyword id="KW-0456">Lyase</keyword>
<keyword id="KW-1185">Reference proteome</keyword>